<accession>A9KV69</accession>
<feature type="chain" id="PRO_0000357399" description="Enolase-phosphatase E1">
    <location>
        <begin position="1"/>
        <end position="226"/>
    </location>
</feature>
<keyword id="KW-0028">Amino-acid biosynthesis</keyword>
<keyword id="KW-0378">Hydrolase</keyword>
<keyword id="KW-0460">Magnesium</keyword>
<keyword id="KW-0479">Metal-binding</keyword>
<keyword id="KW-0486">Methionine biosynthesis</keyword>
<sequence length="226" mass="25433">MGIRAIVVDTAGTTTDLNFIQDVLFPYSVKALPDFLEQNQHNVLVENCICDTRDIALEPDADLARVTEILQQWVSEDRKATPLKTLQGLIWKQGYAHGEFKGHIFPDFIEAVKRFSEQNLRIYSFSSGSVDAQKLLFSHSDGGDLTEMFNGHFDTRTGNKLDKQAYCNILNTISLSPKQVLFVSDVIEELKAADAAGMMTCQMVRDSKQRTGEFRTISSFDELLIE</sequence>
<proteinExistence type="inferred from homology"/>
<comment type="function">
    <text evidence="1">Bifunctional enzyme that catalyzes the enolization of 2,3-diketo-5-methylthiopentyl-1-phosphate (DK-MTP-1-P) into the intermediate 2-hydroxy-3-keto-5-methylthiopentenyl-1-phosphate (HK-MTPenyl-1-P), which is then dephosphorylated to form the acireductone 1,2-dihydroxy-3-keto-5-methylthiopentene (DHK-MTPene).</text>
</comment>
<comment type="catalytic activity">
    <reaction evidence="1">
        <text>5-methylsulfanyl-2,3-dioxopentyl phosphate + H2O = 1,2-dihydroxy-5-(methylsulfanyl)pent-1-en-3-one + phosphate</text>
        <dbReference type="Rhea" id="RHEA:21700"/>
        <dbReference type="ChEBI" id="CHEBI:15377"/>
        <dbReference type="ChEBI" id="CHEBI:43474"/>
        <dbReference type="ChEBI" id="CHEBI:49252"/>
        <dbReference type="ChEBI" id="CHEBI:58828"/>
        <dbReference type="EC" id="3.1.3.77"/>
    </reaction>
</comment>
<comment type="cofactor">
    <cofactor evidence="1">
        <name>Mg(2+)</name>
        <dbReference type="ChEBI" id="CHEBI:18420"/>
    </cofactor>
    <text evidence="1">Binds 1 Mg(2+) ion per subunit.</text>
</comment>
<comment type="pathway">
    <text evidence="1">Amino-acid biosynthesis; L-methionine biosynthesis via salvage pathway; L-methionine from S-methyl-5-thio-alpha-D-ribose 1-phosphate: step 3/6.</text>
</comment>
<comment type="pathway">
    <text evidence="1">Amino-acid biosynthesis; L-methionine biosynthesis via salvage pathway; L-methionine from S-methyl-5-thio-alpha-D-ribose 1-phosphate: step 4/6.</text>
</comment>
<comment type="subunit">
    <text evidence="1">Monomer.</text>
</comment>
<comment type="similarity">
    <text evidence="1">Belongs to the HAD-like hydrolase superfamily. MasA/MtnC family.</text>
</comment>
<gene>
    <name evidence="1" type="primary">mtnC</name>
    <name type="ordered locus">Sbal195_0091</name>
</gene>
<protein>
    <recommendedName>
        <fullName evidence="1">Enolase-phosphatase E1</fullName>
        <ecNumber evidence="1">3.1.3.77</ecNumber>
    </recommendedName>
    <alternativeName>
        <fullName evidence="1">2,3-diketo-5-methylthio-1-phosphopentane phosphatase</fullName>
    </alternativeName>
</protein>
<organism>
    <name type="scientific">Shewanella baltica (strain OS195)</name>
    <dbReference type="NCBI Taxonomy" id="399599"/>
    <lineage>
        <taxon>Bacteria</taxon>
        <taxon>Pseudomonadati</taxon>
        <taxon>Pseudomonadota</taxon>
        <taxon>Gammaproteobacteria</taxon>
        <taxon>Alteromonadales</taxon>
        <taxon>Shewanellaceae</taxon>
        <taxon>Shewanella</taxon>
    </lineage>
</organism>
<name>MTNC_SHEB9</name>
<reference key="1">
    <citation type="submission" date="2007-11" db="EMBL/GenBank/DDBJ databases">
        <title>Complete sequence of chromosome of Shewanella baltica OS195.</title>
        <authorList>
            <consortium name="US DOE Joint Genome Institute"/>
            <person name="Copeland A."/>
            <person name="Lucas S."/>
            <person name="Lapidus A."/>
            <person name="Barry K."/>
            <person name="Glavina del Rio T."/>
            <person name="Dalin E."/>
            <person name="Tice H."/>
            <person name="Pitluck S."/>
            <person name="Chain P."/>
            <person name="Malfatti S."/>
            <person name="Shin M."/>
            <person name="Vergez L."/>
            <person name="Schmutz J."/>
            <person name="Larimer F."/>
            <person name="Land M."/>
            <person name="Hauser L."/>
            <person name="Kyrpides N."/>
            <person name="Kim E."/>
            <person name="Brettar I."/>
            <person name="Rodrigues J."/>
            <person name="Konstantinidis K."/>
            <person name="Klappenbach J."/>
            <person name="Hofle M."/>
            <person name="Tiedje J."/>
            <person name="Richardson P."/>
        </authorList>
    </citation>
    <scope>NUCLEOTIDE SEQUENCE [LARGE SCALE GENOMIC DNA]</scope>
    <source>
        <strain>OS195</strain>
    </source>
</reference>
<dbReference type="EC" id="3.1.3.77" evidence="1"/>
<dbReference type="EMBL" id="CP000891">
    <property type="protein sequence ID" value="ABX47273.1"/>
    <property type="molecule type" value="Genomic_DNA"/>
</dbReference>
<dbReference type="RefSeq" id="WP_006084850.1">
    <property type="nucleotide sequence ID" value="NC_009997.1"/>
</dbReference>
<dbReference type="SMR" id="A9KV69"/>
<dbReference type="GeneID" id="11770456"/>
<dbReference type="KEGG" id="sbn:Sbal195_0091"/>
<dbReference type="HOGENOM" id="CLU_023273_0_0_6"/>
<dbReference type="UniPathway" id="UPA00904">
    <property type="reaction ID" value="UER00876"/>
</dbReference>
<dbReference type="UniPathway" id="UPA00904">
    <property type="reaction ID" value="UER00877"/>
</dbReference>
<dbReference type="Proteomes" id="UP000000770">
    <property type="component" value="Chromosome"/>
</dbReference>
<dbReference type="GO" id="GO:0043715">
    <property type="term" value="F:2,3-diketo-5-methylthiopentyl-1-phosphate enolase activity"/>
    <property type="evidence" value="ECO:0007669"/>
    <property type="project" value="UniProtKB-UniRule"/>
</dbReference>
<dbReference type="GO" id="GO:0043716">
    <property type="term" value="F:2-hydroxy-3-keto-5-methylthiopentenyl-1-phosphate phosphatase activity"/>
    <property type="evidence" value="ECO:0007669"/>
    <property type="project" value="UniProtKB-UniRule"/>
</dbReference>
<dbReference type="GO" id="GO:0043874">
    <property type="term" value="F:acireductone synthase activity"/>
    <property type="evidence" value="ECO:0007669"/>
    <property type="project" value="UniProtKB-EC"/>
</dbReference>
<dbReference type="GO" id="GO:0000287">
    <property type="term" value="F:magnesium ion binding"/>
    <property type="evidence" value="ECO:0007669"/>
    <property type="project" value="UniProtKB-UniRule"/>
</dbReference>
<dbReference type="GO" id="GO:0019509">
    <property type="term" value="P:L-methionine salvage from methylthioadenosine"/>
    <property type="evidence" value="ECO:0007669"/>
    <property type="project" value="UniProtKB-UniRule"/>
</dbReference>
<dbReference type="CDD" id="cd01629">
    <property type="entry name" value="HAD_EP"/>
    <property type="match status" value="1"/>
</dbReference>
<dbReference type="FunFam" id="1.10.720.60:FF:000008">
    <property type="entry name" value="Enolase-phosphatase E1"/>
    <property type="match status" value="1"/>
</dbReference>
<dbReference type="Gene3D" id="1.10.720.60">
    <property type="match status" value="1"/>
</dbReference>
<dbReference type="Gene3D" id="3.40.50.1000">
    <property type="entry name" value="HAD superfamily/HAD-like"/>
    <property type="match status" value="1"/>
</dbReference>
<dbReference type="HAMAP" id="MF_01681">
    <property type="entry name" value="Salvage_MtnC"/>
    <property type="match status" value="1"/>
</dbReference>
<dbReference type="InterPro" id="IPR023943">
    <property type="entry name" value="Enolase-ppase_E1"/>
</dbReference>
<dbReference type="InterPro" id="IPR036412">
    <property type="entry name" value="HAD-like_sf"/>
</dbReference>
<dbReference type="InterPro" id="IPR006439">
    <property type="entry name" value="HAD-SF_hydro_IA"/>
</dbReference>
<dbReference type="InterPro" id="IPR023214">
    <property type="entry name" value="HAD_sf"/>
</dbReference>
<dbReference type="NCBIfam" id="TIGR01691">
    <property type="entry name" value="enolase-ppase"/>
    <property type="match status" value="1"/>
</dbReference>
<dbReference type="NCBIfam" id="TIGR01549">
    <property type="entry name" value="HAD-SF-IA-v1"/>
    <property type="match status" value="1"/>
</dbReference>
<dbReference type="PANTHER" id="PTHR20371">
    <property type="entry name" value="ENOLASE-PHOSPHATASE E1"/>
    <property type="match status" value="1"/>
</dbReference>
<dbReference type="PANTHER" id="PTHR20371:SF1">
    <property type="entry name" value="ENOLASE-PHOSPHATASE E1"/>
    <property type="match status" value="1"/>
</dbReference>
<dbReference type="Pfam" id="PF00702">
    <property type="entry name" value="Hydrolase"/>
    <property type="match status" value="1"/>
</dbReference>
<dbReference type="PRINTS" id="PR00413">
    <property type="entry name" value="HADHALOGNASE"/>
</dbReference>
<dbReference type="SFLD" id="SFLDF00044">
    <property type="entry name" value="enolase-phosphatase"/>
    <property type="match status" value="1"/>
</dbReference>
<dbReference type="SFLD" id="SFLDS00003">
    <property type="entry name" value="Haloacid_Dehalogenase"/>
    <property type="match status" value="1"/>
</dbReference>
<dbReference type="SUPFAM" id="SSF56784">
    <property type="entry name" value="HAD-like"/>
    <property type="match status" value="1"/>
</dbReference>
<evidence type="ECO:0000255" key="1">
    <source>
        <dbReference type="HAMAP-Rule" id="MF_01681"/>
    </source>
</evidence>